<dbReference type="EMBL" id="CP000720">
    <property type="protein sequence ID" value="ABS48260.1"/>
    <property type="molecule type" value="Genomic_DNA"/>
</dbReference>
<dbReference type="RefSeq" id="WP_012104429.1">
    <property type="nucleotide sequence ID" value="NC_009708.1"/>
</dbReference>
<dbReference type="SMR" id="A7FE10"/>
<dbReference type="KEGG" id="ypi:YpsIP31758_0495"/>
<dbReference type="HOGENOM" id="CLU_044581_0_0_6"/>
<dbReference type="Proteomes" id="UP000002412">
    <property type="component" value="Chromosome"/>
</dbReference>
<dbReference type="GO" id="GO:0005886">
    <property type="term" value="C:plasma membrane"/>
    <property type="evidence" value="ECO:0007669"/>
    <property type="project" value="UniProtKB-SubCell"/>
</dbReference>
<dbReference type="GO" id="GO:0005295">
    <property type="term" value="F:neutral L-amino acid:sodium symporter activity"/>
    <property type="evidence" value="ECO:0007669"/>
    <property type="project" value="TreeGrafter"/>
</dbReference>
<dbReference type="GO" id="GO:0032329">
    <property type="term" value="P:serine transport"/>
    <property type="evidence" value="ECO:0007669"/>
    <property type="project" value="InterPro"/>
</dbReference>
<dbReference type="GO" id="GO:0015826">
    <property type="term" value="P:threonine transport"/>
    <property type="evidence" value="ECO:0007669"/>
    <property type="project" value="InterPro"/>
</dbReference>
<dbReference type="FunFam" id="1.10.3860.10:FF:000003">
    <property type="entry name" value="Serine/threonine transporter sstT"/>
    <property type="match status" value="1"/>
</dbReference>
<dbReference type="Gene3D" id="1.10.3860.10">
    <property type="entry name" value="Sodium:dicarboxylate symporter"/>
    <property type="match status" value="1"/>
</dbReference>
<dbReference type="HAMAP" id="MF_01582">
    <property type="entry name" value="Ser_Thr_transp_SstT"/>
    <property type="match status" value="1"/>
</dbReference>
<dbReference type="InterPro" id="IPR001991">
    <property type="entry name" value="Na-dicarboxylate_symporter"/>
</dbReference>
<dbReference type="InterPro" id="IPR036458">
    <property type="entry name" value="Na:dicarbo_symporter_sf"/>
</dbReference>
<dbReference type="InterPro" id="IPR023025">
    <property type="entry name" value="Ser_Thr_transp_SstT"/>
</dbReference>
<dbReference type="NCBIfam" id="NF010151">
    <property type="entry name" value="PRK13628.1"/>
    <property type="match status" value="1"/>
</dbReference>
<dbReference type="PANTHER" id="PTHR42865">
    <property type="entry name" value="PROTON/GLUTAMATE-ASPARTATE SYMPORTER"/>
    <property type="match status" value="1"/>
</dbReference>
<dbReference type="PANTHER" id="PTHR42865:SF8">
    <property type="entry name" value="SERINE_THREONINE TRANSPORTER SSTT"/>
    <property type="match status" value="1"/>
</dbReference>
<dbReference type="Pfam" id="PF00375">
    <property type="entry name" value="SDF"/>
    <property type="match status" value="1"/>
</dbReference>
<dbReference type="PRINTS" id="PR00173">
    <property type="entry name" value="EDTRNSPORT"/>
</dbReference>
<dbReference type="SUPFAM" id="SSF118215">
    <property type="entry name" value="Proton glutamate symport protein"/>
    <property type="match status" value="1"/>
</dbReference>
<sequence>MEKTQSVFIRFIVNGSLVKQILIGLVAGIVLALVSTPAAIAVGLLGSLFVGALKAVAPVLVLMLVIASIANHKKGQKTSIRPILFLYVLGAFSAALVAVVVSFIYPSTLILVAESADITPPSGIVEVLHGLLNSIIANPIHALLNANYIGILAWAVGLGIALRHAADTTKALINDMSDAVTLVVRVVIRFAPLGIFGLVASTIAATGFGALQLYVQLLVVLIGCMLLVALVVNPLIVYWKIRRNPYPLVFACLRESGVTAFFTRSSAANIPVNMEMCKKMNLNEDTYSISIPLGATINMAGAAITITVLTLAAVHTLGITVDLPTALLLSVVAAVCACGASGVAGGSLLLIPLACSMFGIPNDVAMQVVGVGFIIGVLQDSAETALNSSTDVLFTAAVCQAEDAKLANPDALAAGKSV</sequence>
<evidence type="ECO:0000255" key="1">
    <source>
        <dbReference type="HAMAP-Rule" id="MF_01582"/>
    </source>
</evidence>
<accession>A7FE10</accession>
<reference key="1">
    <citation type="journal article" date="2007" name="PLoS Genet.">
        <title>The complete genome sequence of Yersinia pseudotuberculosis IP31758, the causative agent of Far East scarlet-like fever.</title>
        <authorList>
            <person name="Eppinger M."/>
            <person name="Rosovitz M.J."/>
            <person name="Fricke W.F."/>
            <person name="Rasko D.A."/>
            <person name="Kokorina G."/>
            <person name="Fayolle C."/>
            <person name="Lindler L.E."/>
            <person name="Carniel E."/>
            <person name="Ravel J."/>
        </authorList>
    </citation>
    <scope>NUCLEOTIDE SEQUENCE [LARGE SCALE GENOMIC DNA]</scope>
    <source>
        <strain>IP 31758</strain>
    </source>
</reference>
<comment type="function">
    <text evidence="1">Involved in the import of serine and threonine into the cell, with the concomitant import of sodium (symport system).</text>
</comment>
<comment type="catalytic activity">
    <reaction evidence="1">
        <text>L-serine(in) + Na(+)(in) = L-serine(out) + Na(+)(out)</text>
        <dbReference type="Rhea" id="RHEA:29575"/>
        <dbReference type="ChEBI" id="CHEBI:29101"/>
        <dbReference type="ChEBI" id="CHEBI:33384"/>
    </reaction>
    <physiologicalReaction direction="right-to-left" evidence="1">
        <dbReference type="Rhea" id="RHEA:29577"/>
    </physiologicalReaction>
</comment>
<comment type="catalytic activity">
    <reaction evidence="1">
        <text>L-threonine(in) + Na(+)(in) = L-threonine(out) + Na(+)(out)</text>
        <dbReference type="Rhea" id="RHEA:69999"/>
        <dbReference type="ChEBI" id="CHEBI:29101"/>
        <dbReference type="ChEBI" id="CHEBI:57926"/>
    </reaction>
    <physiologicalReaction direction="right-to-left" evidence="1">
        <dbReference type="Rhea" id="RHEA:70001"/>
    </physiologicalReaction>
</comment>
<comment type="subcellular location">
    <subcellularLocation>
        <location evidence="1">Cell inner membrane</location>
        <topology evidence="1">Multi-pass membrane protein</topology>
    </subcellularLocation>
</comment>
<comment type="similarity">
    <text evidence="1">Belongs to the dicarboxylate/amino acid:cation symporter (DAACS) (TC 2.A.23) family.</text>
</comment>
<proteinExistence type="inferred from homology"/>
<protein>
    <recommendedName>
        <fullName evidence="1">Serine/threonine transporter SstT</fullName>
    </recommendedName>
    <alternativeName>
        <fullName evidence="1">Na(+)/serine-threonine symporter</fullName>
    </alternativeName>
</protein>
<keyword id="KW-0029">Amino-acid transport</keyword>
<keyword id="KW-0997">Cell inner membrane</keyword>
<keyword id="KW-1003">Cell membrane</keyword>
<keyword id="KW-0472">Membrane</keyword>
<keyword id="KW-0769">Symport</keyword>
<keyword id="KW-0812">Transmembrane</keyword>
<keyword id="KW-1133">Transmembrane helix</keyword>
<keyword id="KW-0813">Transport</keyword>
<feature type="chain" id="PRO_1000069287" description="Serine/threonine transporter SstT">
    <location>
        <begin position="1"/>
        <end position="418"/>
    </location>
</feature>
<feature type="transmembrane region" description="Helical" evidence="1">
    <location>
        <begin position="21"/>
        <end position="41"/>
    </location>
</feature>
<feature type="transmembrane region" description="Helical" evidence="1">
    <location>
        <begin position="49"/>
        <end position="69"/>
    </location>
</feature>
<feature type="transmembrane region" description="Helical" evidence="1">
    <location>
        <begin position="83"/>
        <end position="103"/>
    </location>
</feature>
<feature type="transmembrane region" description="Helical" evidence="1">
    <location>
        <begin position="142"/>
        <end position="162"/>
    </location>
</feature>
<feature type="transmembrane region" description="Helical" evidence="1">
    <location>
        <begin position="190"/>
        <end position="210"/>
    </location>
</feature>
<feature type="transmembrane region" description="Helical" evidence="1">
    <location>
        <begin position="217"/>
        <end position="237"/>
    </location>
</feature>
<feature type="transmembrane region" description="Helical" evidence="1">
    <location>
        <begin position="299"/>
        <end position="319"/>
    </location>
</feature>
<feature type="transmembrane region" description="Helical" evidence="1">
    <location>
        <begin position="331"/>
        <end position="351"/>
    </location>
</feature>
<organism>
    <name type="scientific">Yersinia pseudotuberculosis serotype O:1b (strain IP 31758)</name>
    <dbReference type="NCBI Taxonomy" id="349747"/>
    <lineage>
        <taxon>Bacteria</taxon>
        <taxon>Pseudomonadati</taxon>
        <taxon>Pseudomonadota</taxon>
        <taxon>Gammaproteobacteria</taxon>
        <taxon>Enterobacterales</taxon>
        <taxon>Yersiniaceae</taxon>
        <taxon>Yersinia</taxon>
    </lineage>
</organism>
<name>SSTT_YERP3</name>
<gene>
    <name evidence="1" type="primary">sstT</name>
    <name type="ordered locus">YpsIP31758_0495</name>
</gene>